<keyword id="KW-0002">3D-structure</keyword>
<keyword id="KW-0025">Alternative splicing</keyword>
<keyword id="KW-0963">Cytoplasm</keyword>
<keyword id="KW-0217">Developmental protein</keyword>
<keyword id="KW-0221">Differentiation</keyword>
<keyword id="KW-0238">DNA-binding</keyword>
<keyword id="KW-0488">Methylation</keyword>
<keyword id="KW-1267">Proteomics identification</keyword>
<keyword id="KW-1185">Reference proteome</keyword>
<keyword id="KW-0677">Repeat</keyword>
<keyword id="KW-0694">RNA-binding</keyword>
<keyword id="KW-0744">Spermatogenesis</keyword>
<comment type="function">
    <text evidence="1">Involved in spermatogenesis and sperm function. Plays a role in regulation of cell growth. Binds to double-stranded DNA and RNA. Binds most efficiently to poly(I:C) RNA than to poly(dI:dC) DNA. Binds also to single-stranded poly(G) RNA. Binds non-specifically to the mRNA PRM1 3'-UTR and adenovirus VA RNA (By similarity).</text>
</comment>
<comment type="subunit">
    <text evidence="1">Interacts with EIF2AK2. Associates with microtubules; it is unsure whether such interaction is direct or indirect.</text>
</comment>
<comment type="interaction">
    <interactant intactId="EBI-740355">
        <id>Q96SI9</id>
    </interactant>
    <interactant intactId="EBI-12002366">
        <id>P78563-4</id>
        <label>ADARB1</label>
    </interactant>
    <organismsDiffer>false</organismsDiffer>
    <experiments>3</experiments>
</comment>
<comment type="interaction">
    <interactant intactId="EBI-740355">
        <id>Q96SI9</id>
    </interactant>
    <interactant intactId="EBI-12020154">
        <id>Q13555-5</id>
        <label>CAMK2G</label>
    </interactant>
    <organismsDiffer>false</organismsDiffer>
    <experiments>3</experiments>
</comment>
<comment type="interaction">
    <interactant intactId="EBI-740355">
        <id>Q96SI9</id>
    </interactant>
    <interactant intactId="EBI-7875264">
        <id>O75553</id>
        <label>DAB1</label>
    </interactant>
    <organismsDiffer>false</organismsDiffer>
    <experiments>3</experiments>
</comment>
<comment type="interaction">
    <interactant intactId="EBI-740355">
        <id>Q96SI9</id>
    </interactant>
    <interactant intactId="EBI-7261162">
        <id>Q9UGU5</id>
        <label>HMGXB4</label>
    </interactant>
    <organismsDiffer>false</organismsDiffer>
    <experiments>3</experiments>
</comment>
<comment type="interaction">
    <interactant intactId="EBI-740355">
        <id>Q96SI9</id>
    </interactant>
    <interactant intactId="EBI-713955">
        <id>O75569</id>
        <label>PRKRA</label>
    </interactant>
    <organismsDiffer>false</organismsDiffer>
    <experiments>4</experiments>
</comment>
<comment type="interaction">
    <interactant intactId="EBI-740355">
        <id>Q96SI9</id>
    </interactant>
    <interactant intactId="EBI-12123390">
        <id>Q9NWB1-5</id>
        <label>RBFOX1</label>
    </interactant>
    <organismsDiffer>false</organismsDiffer>
    <experiments>3</experiments>
</comment>
<comment type="interaction">
    <interactant intactId="EBI-740355">
        <id>Q96SI9</id>
    </interactant>
    <interactant intactId="EBI-740322">
        <id>Q93062</id>
        <label>RBPMS</label>
    </interactant>
    <organismsDiffer>false</organismsDiffer>
    <experiments>4</experiments>
</comment>
<comment type="interaction">
    <interactant intactId="EBI-740355">
        <id>Q96SI9</id>
    </interactant>
    <interactant intactId="EBI-740343">
        <id>Q93062-3</id>
        <label>RBPMS</label>
    </interactant>
    <organismsDiffer>false</organismsDiffer>
    <experiments>3</experiments>
</comment>
<comment type="interaction">
    <interactant intactId="EBI-740355">
        <id>Q96SI9</id>
    </interactant>
    <interactant intactId="EBI-11987469">
        <id>Q6ZRY4</id>
        <label>RBPMS2</label>
    </interactant>
    <organismsDiffer>false</organismsDiffer>
    <experiments>3</experiments>
</comment>
<comment type="interaction">
    <interactant intactId="EBI-740355">
        <id>Q96SI9</id>
    </interactant>
    <interactant intactId="EBI-358174">
        <id>O95793</id>
        <label>STAU1</label>
    </interactant>
    <organismsDiffer>false</organismsDiffer>
    <experiments>3</experiments>
</comment>
<comment type="interaction">
    <interactant intactId="EBI-740355">
        <id>Q96SI9</id>
    </interactant>
    <interactant intactId="EBI-978581">
        <id>Q15633</id>
        <label>TARBP2</label>
    </interactant>
    <organismsDiffer>false</organismsDiffer>
    <experiments>4</experiments>
</comment>
<comment type="interaction">
    <interactant intactId="EBI-740355">
        <id>Q96SI9</id>
    </interactant>
    <interactant intactId="EBI-741515">
        <id>Q9NVV9</id>
        <label>THAP1</label>
    </interactant>
    <organismsDiffer>false</organismsDiffer>
    <experiments>7</experiments>
</comment>
<comment type="interaction">
    <interactant intactId="EBI-740355">
        <id>Q96SI9</id>
    </interactant>
    <interactant intactId="EBI-11529334">
        <id>Q9H898-2</id>
        <label>ZMAT4</label>
    </interactant>
    <organismsDiffer>false</organismsDiffer>
    <experiments>3</experiments>
</comment>
<comment type="interaction">
    <interactant intactId="EBI-740355">
        <id>Q96SI9</id>
    </interactant>
    <interactant intactId="EBI-2462313">
        <id>Q9UL40</id>
        <label>ZNF346</label>
    </interactant>
    <organismsDiffer>false</organismsDiffer>
    <experiments>3</experiments>
</comment>
<comment type="subcellular location">
    <subcellularLocation>
        <location evidence="1">Cytoplasm</location>
    </subcellularLocation>
    <text evidence="1">Microtubule-associated that localizes to the manchette in developing spermatids.</text>
</comment>
<comment type="alternative products">
    <event type="alternative splicing"/>
    <isoform>
        <id>Q96SI9-1</id>
        <name>1</name>
        <sequence type="displayed"/>
    </isoform>
    <isoform>
        <id>Q96SI9-2</id>
        <name>2</name>
        <sequence type="described" ref="VSP_022937"/>
    </isoform>
</comment>
<comment type="sequence caution" evidence="8">
    <conflict type="miscellaneous discrepancy">
        <sequence resource="EMBL-CDS" id="AAI08732"/>
    </conflict>
    <text>Contaminating sequence. Potential poly-A sequence.</text>
</comment>
<comment type="sequence caution" evidence="8">
    <conflict type="erroneous initiation">
        <sequence resource="EMBL-CDS" id="BAA92120"/>
    </conflict>
</comment>
<comment type="sequence caution" evidence="8">
    <conflict type="erroneous initiation">
        <sequence resource="EMBL-CDS" id="BAB14873"/>
    </conflict>
</comment>
<sequence length="672" mass="73653">MRSIRSFANDDRHVMVKHSTIYPSPEELEAVQNMVSTVECALKHVSDWLDETNKGTKTEGETEVKKDEAGENYSKDQGGRTLCGVMRIGLVAKGLLIKDDMDLELVLMCKDKPTETLLNTVKDNLPIQIQKLTEEKYQVEQCVNEASIIIRNTKEPTLTLKVILTSPLIRDELEKKDGENVSMKDPPDLLDRQKCLNALASLRHAKWFQARANGLKSCVIVLRILRDLCNRVPTWAPLKGWPLELICEKSIGTCNRPLGAGEALRRVMECLASGILLPGGPGLHDPCERDPTDALSYMTIQQKEDITHSAQHALRLSAFGQIYKVLEMDPLPSSKPFQKYSWSVTDKEGAGSSALKRPFEDGLGDDKDPNKKMKRNLRKILDSKAIDLMNALMRLNQIRPGLQYKLLSQSGPVHAPVFTMSVDVDGTTYEASGPSKKTAKLHVAVKVLQAMGYPTGFDADIECMSSDEKSDNESKNETVSSNSSNNTGNSTTETSSTLEVRTQGPILTASGKNPVMELNEKRRGLKYELISETGGSHDKRFVMEVEVDGQKFRGAGPNKKVAKASAALAALEKLFSGPNAANNKKKKIIPQAKGVVNTAVSAAVQAVRGRGRGTLTRGAFVGATAAPGYIAPGYGTPYGYSTAAPAYGLPKRMVLLPVMKFPTYPVPHYSFF</sequence>
<dbReference type="EMBL" id="AF333337">
    <property type="protein sequence ID" value="AAK20832.1"/>
    <property type="molecule type" value="mRNA"/>
</dbReference>
<dbReference type="EMBL" id="AL136866">
    <property type="protein sequence ID" value="CAB66800.1"/>
    <property type="molecule type" value="mRNA"/>
</dbReference>
<dbReference type="EMBL" id="AK002169">
    <property type="protein sequence ID" value="BAA92120.1"/>
    <property type="status" value="ALT_INIT"/>
    <property type="molecule type" value="mRNA"/>
</dbReference>
<dbReference type="EMBL" id="AK024285">
    <property type="protein sequence ID" value="BAB14873.1"/>
    <property type="status" value="ALT_INIT"/>
    <property type="molecule type" value="mRNA"/>
</dbReference>
<dbReference type="EMBL" id="AK027890">
    <property type="protein sequence ID" value="BAB55434.1"/>
    <property type="molecule type" value="mRNA"/>
</dbReference>
<dbReference type="EMBL" id="AL365338">
    <property type="status" value="NOT_ANNOTATED_CDS"/>
    <property type="molecule type" value="Genomic_DNA"/>
</dbReference>
<dbReference type="EMBL" id="BC002693">
    <property type="protein sequence ID" value="AAH02693.2"/>
    <property type="molecule type" value="mRNA"/>
</dbReference>
<dbReference type="EMBL" id="BC017732">
    <property type="protein sequence ID" value="AAH17732.1"/>
    <property type="molecule type" value="mRNA"/>
</dbReference>
<dbReference type="EMBL" id="BC108731">
    <property type="protein sequence ID" value="AAI08732.1"/>
    <property type="status" value="ALT_SEQ"/>
    <property type="molecule type" value="mRNA"/>
</dbReference>
<dbReference type="CCDS" id="CCDS55337.1">
    <molecule id="Q96SI9-2"/>
</dbReference>
<dbReference type="CCDS" id="CCDS6851.1">
    <molecule id="Q96SI9-1"/>
</dbReference>
<dbReference type="RefSeq" id="NP_001164608.1">
    <molecule id="Q96SI9-2"/>
    <property type="nucleotide sequence ID" value="NM_001171137.2"/>
</dbReference>
<dbReference type="RefSeq" id="NP_001363035.1">
    <molecule id="Q96SI9-1"/>
    <property type="nucleotide sequence ID" value="NM_001376106.1"/>
</dbReference>
<dbReference type="RefSeq" id="NP_001363036.1">
    <molecule id="Q96SI9-1"/>
    <property type="nucleotide sequence ID" value="NM_001376107.1"/>
</dbReference>
<dbReference type="RefSeq" id="NP_060857.2">
    <molecule id="Q96SI9-1"/>
    <property type="nucleotide sequence ID" value="NM_018387.4"/>
</dbReference>
<dbReference type="RefSeq" id="XP_016870383.1">
    <property type="nucleotide sequence ID" value="XM_017014894.1"/>
</dbReference>
<dbReference type="RefSeq" id="XP_016870384.1">
    <property type="nucleotide sequence ID" value="XM_017014895.1"/>
</dbReference>
<dbReference type="RefSeq" id="XP_016870385.1">
    <property type="nucleotide sequence ID" value="XM_017014896.1"/>
</dbReference>
<dbReference type="RefSeq" id="XP_047279518.1">
    <molecule id="Q96SI9-1"/>
    <property type="nucleotide sequence ID" value="XM_047423562.1"/>
</dbReference>
<dbReference type="RefSeq" id="XP_054219200.1">
    <molecule id="Q96SI9-1"/>
    <property type="nucleotide sequence ID" value="XM_054363225.1"/>
</dbReference>
<dbReference type="RefSeq" id="XP_054219201.1">
    <molecule id="Q96SI9-1"/>
    <property type="nucleotide sequence ID" value="XM_054363226.1"/>
</dbReference>
<dbReference type="RefSeq" id="XP_054219202.1">
    <molecule id="Q96SI9-1"/>
    <property type="nucleotide sequence ID" value="XM_054363227.1"/>
</dbReference>
<dbReference type="RefSeq" id="XP_054219203.1">
    <molecule id="Q96SI9-1"/>
    <property type="nucleotide sequence ID" value="XM_054363228.1"/>
</dbReference>
<dbReference type="PDB" id="2DMY">
    <property type="method" value="NMR"/>
    <property type="chains" value="A=378-461"/>
</dbReference>
<dbReference type="PDBsum" id="2DMY"/>
<dbReference type="SMR" id="Q96SI9"/>
<dbReference type="BioGRID" id="120623">
    <property type="interactions" value="293"/>
</dbReference>
<dbReference type="FunCoup" id="Q96SI9">
    <property type="interactions" value="1902"/>
</dbReference>
<dbReference type="IntAct" id="Q96SI9">
    <property type="interactions" value="138"/>
</dbReference>
<dbReference type="MINT" id="Q96SI9"/>
<dbReference type="STRING" id="9606.ENSP00000321347"/>
<dbReference type="GlyGen" id="Q96SI9">
    <property type="glycosylation" value="1 site, 1 O-linked glycan (1 site)"/>
</dbReference>
<dbReference type="iPTMnet" id="Q96SI9"/>
<dbReference type="MetOSite" id="Q96SI9"/>
<dbReference type="PhosphoSitePlus" id="Q96SI9"/>
<dbReference type="SwissPalm" id="Q96SI9"/>
<dbReference type="BioMuta" id="STRBP"/>
<dbReference type="DMDM" id="74752134"/>
<dbReference type="jPOST" id="Q96SI9"/>
<dbReference type="MassIVE" id="Q96SI9"/>
<dbReference type="PaxDb" id="9606-ENSP00000415968"/>
<dbReference type="PeptideAtlas" id="Q96SI9"/>
<dbReference type="ProteomicsDB" id="78115">
    <molecule id="Q96SI9-1"/>
</dbReference>
<dbReference type="ProteomicsDB" id="78116">
    <molecule id="Q96SI9-2"/>
</dbReference>
<dbReference type="Pumba" id="Q96SI9"/>
<dbReference type="Antibodypedia" id="16209">
    <property type="antibodies" value="78 antibodies from 21 providers"/>
</dbReference>
<dbReference type="DNASU" id="55342"/>
<dbReference type="Ensembl" id="ENST00000348403.10">
    <molecule id="Q96SI9-1"/>
    <property type="protein sequence ID" value="ENSP00000321347.7"/>
    <property type="gene ID" value="ENSG00000165209.19"/>
</dbReference>
<dbReference type="Ensembl" id="ENST00000360998.3">
    <molecule id="Q96SI9-2"/>
    <property type="protein sequence ID" value="ENSP00000354271.3"/>
    <property type="gene ID" value="ENSG00000165209.19"/>
</dbReference>
<dbReference type="Ensembl" id="ENST00000447404.6">
    <molecule id="Q96SI9-1"/>
    <property type="protein sequence ID" value="ENSP00000415968.2"/>
    <property type="gene ID" value="ENSG00000165209.19"/>
</dbReference>
<dbReference type="GeneID" id="55342"/>
<dbReference type="KEGG" id="hsa:55342"/>
<dbReference type="MANE-Select" id="ENST00000348403.10">
    <property type="protein sequence ID" value="ENSP00000321347.7"/>
    <property type="RefSeq nucleotide sequence ID" value="NM_018387.5"/>
    <property type="RefSeq protein sequence ID" value="NP_060857.2"/>
</dbReference>
<dbReference type="UCSC" id="uc004bnu.4">
    <molecule id="Q96SI9-1"/>
    <property type="organism name" value="human"/>
</dbReference>
<dbReference type="AGR" id="HGNC:16462"/>
<dbReference type="CTD" id="55342"/>
<dbReference type="DisGeNET" id="55342"/>
<dbReference type="GeneCards" id="STRBP"/>
<dbReference type="HGNC" id="HGNC:16462">
    <property type="gene designation" value="STRBP"/>
</dbReference>
<dbReference type="HPA" id="ENSG00000165209">
    <property type="expression patterns" value="Low tissue specificity"/>
</dbReference>
<dbReference type="MalaCards" id="STRBP"/>
<dbReference type="MIM" id="611138">
    <property type="type" value="gene"/>
</dbReference>
<dbReference type="neXtProt" id="NX_Q96SI9"/>
<dbReference type="OpenTargets" id="ENSG00000165209"/>
<dbReference type="PharmGKB" id="PA38145"/>
<dbReference type="VEuPathDB" id="HostDB:ENSG00000165209"/>
<dbReference type="eggNOG" id="KOG3792">
    <property type="taxonomic scope" value="Eukaryota"/>
</dbReference>
<dbReference type="GeneTree" id="ENSGT00940000154687"/>
<dbReference type="HOGENOM" id="CLU_015490_1_0_1"/>
<dbReference type="InParanoid" id="Q96SI9"/>
<dbReference type="OMA" id="APLKGWX"/>
<dbReference type="OrthoDB" id="8898434at2759"/>
<dbReference type="PAN-GO" id="Q96SI9">
    <property type="GO annotations" value="2 GO annotations based on evolutionary models"/>
</dbReference>
<dbReference type="PhylomeDB" id="Q96SI9"/>
<dbReference type="TreeFam" id="TF320194"/>
<dbReference type="PathwayCommons" id="Q96SI9"/>
<dbReference type="SignaLink" id="Q96SI9"/>
<dbReference type="BioGRID-ORCS" id="55342">
    <property type="hits" value="11 hits in 1159 CRISPR screens"/>
</dbReference>
<dbReference type="CD-CODE" id="232F8A39">
    <property type="entry name" value="P-body"/>
</dbReference>
<dbReference type="ChiTaRS" id="STRBP">
    <property type="organism name" value="human"/>
</dbReference>
<dbReference type="EvolutionaryTrace" id="Q96SI9"/>
<dbReference type="GeneWiki" id="STRBP"/>
<dbReference type="GenomeRNAi" id="55342"/>
<dbReference type="Pharos" id="Q96SI9">
    <property type="development level" value="Tbio"/>
</dbReference>
<dbReference type="PRO" id="PR:Q96SI9"/>
<dbReference type="Proteomes" id="UP000005640">
    <property type="component" value="Chromosome 9"/>
</dbReference>
<dbReference type="RNAct" id="Q96SI9">
    <property type="molecule type" value="protein"/>
</dbReference>
<dbReference type="Bgee" id="ENSG00000165209">
    <property type="expression patterns" value="Expressed in secondary oocyte and 185 other cell types or tissues"/>
</dbReference>
<dbReference type="ExpressionAtlas" id="Q96SI9">
    <property type="expression patterns" value="baseline and differential"/>
</dbReference>
<dbReference type="GO" id="GO:0005737">
    <property type="term" value="C:cytoplasm"/>
    <property type="evidence" value="ECO:0007669"/>
    <property type="project" value="UniProtKB-SubCell"/>
</dbReference>
<dbReference type="GO" id="GO:0002177">
    <property type="term" value="C:manchette"/>
    <property type="evidence" value="ECO:0007669"/>
    <property type="project" value="Ensembl"/>
</dbReference>
<dbReference type="GO" id="GO:0005634">
    <property type="term" value="C:nucleus"/>
    <property type="evidence" value="ECO:0000314"/>
    <property type="project" value="LIFEdb"/>
</dbReference>
<dbReference type="GO" id="GO:0003677">
    <property type="term" value="F:DNA binding"/>
    <property type="evidence" value="ECO:0007669"/>
    <property type="project" value="UniProtKB-KW"/>
</dbReference>
<dbReference type="GO" id="GO:0003725">
    <property type="term" value="F:double-stranded RNA binding"/>
    <property type="evidence" value="ECO:0000318"/>
    <property type="project" value="GO_Central"/>
</dbReference>
<dbReference type="GO" id="GO:0008017">
    <property type="term" value="F:microtubule binding"/>
    <property type="evidence" value="ECO:0007669"/>
    <property type="project" value="Ensembl"/>
</dbReference>
<dbReference type="GO" id="GO:0003723">
    <property type="term" value="F:RNA binding"/>
    <property type="evidence" value="ECO:0007005"/>
    <property type="project" value="UniProtKB"/>
</dbReference>
<dbReference type="GO" id="GO:0003727">
    <property type="term" value="F:single-stranded RNA binding"/>
    <property type="evidence" value="ECO:0000318"/>
    <property type="project" value="GO_Central"/>
</dbReference>
<dbReference type="GO" id="GO:0048870">
    <property type="term" value="P:cell motility"/>
    <property type="evidence" value="ECO:0007669"/>
    <property type="project" value="Ensembl"/>
</dbReference>
<dbReference type="GO" id="GO:0007638">
    <property type="term" value="P:mechanosensory behavior"/>
    <property type="evidence" value="ECO:0007669"/>
    <property type="project" value="Ensembl"/>
</dbReference>
<dbReference type="GO" id="GO:0007286">
    <property type="term" value="P:spermatid development"/>
    <property type="evidence" value="ECO:0007669"/>
    <property type="project" value="Ensembl"/>
</dbReference>
<dbReference type="CDD" id="cd19897">
    <property type="entry name" value="DSRM_STRBP-like_rpt2"/>
    <property type="match status" value="1"/>
</dbReference>
<dbReference type="CDD" id="cd19909">
    <property type="entry name" value="DSRM_STRBP_rpt1"/>
    <property type="match status" value="1"/>
</dbReference>
<dbReference type="FunFam" id="1.10.1410.40:FF:000001">
    <property type="entry name" value="interleukin enhancer-binding factor 3 isoform X1"/>
    <property type="match status" value="1"/>
</dbReference>
<dbReference type="FunFam" id="3.30.160.20:FF:000006">
    <property type="entry name" value="interleukin enhancer-binding factor 3 isoform X2"/>
    <property type="match status" value="1"/>
</dbReference>
<dbReference type="FunFam" id="3.30.160.20:FF:000008">
    <property type="entry name" value="interleukin enhancer-binding factor 3 isoform X2"/>
    <property type="match status" value="1"/>
</dbReference>
<dbReference type="FunFam" id="3.30.460.10:FF:000003">
    <property type="entry name" value="interleukin enhancer-binding factor 3 isoform X2"/>
    <property type="match status" value="1"/>
</dbReference>
<dbReference type="Gene3D" id="1.10.1410.40">
    <property type="match status" value="1"/>
</dbReference>
<dbReference type="Gene3D" id="3.30.160.20">
    <property type="match status" value="2"/>
</dbReference>
<dbReference type="Gene3D" id="3.30.460.10">
    <property type="entry name" value="Beta Polymerase, domain 2"/>
    <property type="match status" value="1"/>
</dbReference>
<dbReference type="InterPro" id="IPR014720">
    <property type="entry name" value="dsRBD_dom"/>
</dbReference>
<dbReference type="InterPro" id="IPR006561">
    <property type="entry name" value="DZF_dom"/>
</dbReference>
<dbReference type="InterPro" id="IPR049402">
    <property type="entry name" value="DZF_dom_C"/>
</dbReference>
<dbReference type="InterPro" id="IPR049401">
    <property type="entry name" value="DZF_dom_N"/>
</dbReference>
<dbReference type="InterPro" id="IPR043519">
    <property type="entry name" value="NT_sf"/>
</dbReference>
<dbReference type="InterPro" id="IPR044472">
    <property type="entry name" value="STRBP_DSRM_1"/>
</dbReference>
<dbReference type="PANTHER" id="PTHR45762:SF1">
    <property type="entry name" value="SPERMATID PERINUCLEAR RNA-BINDING PROTEIN"/>
    <property type="match status" value="1"/>
</dbReference>
<dbReference type="PANTHER" id="PTHR45762">
    <property type="entry name" value="ZINC FINGER RNA-BINDING PROTEIN"/>
    <property type="match status" value="1"/>
</dbReference>
<dbReference type="Pfam" id="PF00035">
    <property type="entry name" value="dsrm"/>
    <property type="match status" value="2"/>
</dbReference>
<dbReference type="Pfam" id="PF20965">
    <property type="entry name" value="DZF_C"/>
    <property type="match status" value="1"/>
</dbReference>
<dbReference type="Pfam" id="PF07528">
    <property type="entry name" value="DZF_N"/>
    <property type="match status" value="1"/>
</dbReference>
<dbReference type="SMART" id="SM00358">
    <property type="entry name" value="DSRM"/>
    <property type="match status" value="2"/>
</dbReference>
<dbReference type="SMART" id="SM00572">
    <property type="entry name" value="DZF"/>
    <property type="match status" value="1"/>
</dbReference>
<dbReference type="SUPFAM" id="SSF54768">
    <property type="entry name" value="dsRNA-binding domain-like"/>
    <property type="match status" value="2"/>
</dbReference>
<dbReference type="PROSITE" id="PS50137">
    <property type="entry name" value="DS_RBD"/>
    <property type="match status" value="2"/>
</dbReference>
<dbReference type="PROSITE" id="PS51703">
    <property type="entry name" value="DZF"/>
    <property type="match status" value="1"/>
</dbReference>
<reference key="1">
    <citation type="submission" date="2001-01" db="EMBL/GenBank/DDBJ databases">
        <authorList>
            <person name="Sha J.H."/>
            <person name="Zhou Z.M."/>
            <person name="Li J.M."/>
        </authorList>
    </citation>
    <scope>NUCLEOTIDE SEQUENCE [MRNA] (ISOFORM 1)</scope>
    <source>
        <tissue>Testis</tissue>
    </source>
</reference>
<reference key="2">
    <citation type="journal article" date="2001" name="Genome Res.">
        <title>Towards a catalog of human genes and proteins: sequencing and analysis of 500 novel complete protein coding human cDNAs.</title>
        <authorList>
            <person name="Wiemann S."/>
            <person name="Weil B."/>
            <person name="Wellenreuther R."/>
            <person name="Gassenhuber J."/>
            <person name="Glassl S."/>
            <person name="Ansorge W."/>
            <person name="Boecher M."/>
            <person name="Bloecker H."/>
            <person name="Bauersachs S."/>
            <person name="Blum H."/>
            <person name="Lauber J."/>
            <person name="Duesterhoeft A."/>
            <person name="Beyer A."/>
            <person name="Koehrer K."/>
            <person name="Strack N."/>
            <person name="Mewes H.-W."/>
            <person name="Ottenwaelder B."/>
            <person name="Obermaier B."/>
            <person name="Tampe J."/>
            <person name="Heubner D."/>
            <person name="Wambutt R."/>
            <person name="Korn B."/>
            <person name="Klein M."/>
            <person name="Poustka A."/>
        </authorList>
    </citation>
    <scope>NUCLEOTIDE SEQUENCE [LARGE SCALE MRNA] (ISOFORM 2)</scope>
    <source>
        <tissue>Testis</tissue>
    </source>
</reference>
<reference key="3">
    <citation type="journal article" date="2004" name="Nat. Genet.">
        <title>Complete sequencing and characterization of 21,243 full-length human cDNAs.</title>
        <authorList>
            <person name="Ota T."/>
            <person name="Suzuki Y."/>
            <person name="Nishikawa T."/>
            <person name="Otsuki T."/>
            <person name="Sugiyama T."/>
            <person name="Irie R."/>
            <person name="Wakamatsu A."/>
            <person name="Hayashi K."/>
            <person name="Sato H."/>
            <person name="Nagai K."/>
            <person name="Kimura K."/>
            <person name="Makita H."/>
            <person name="Sekine M."/>
            <person name="Obayashi M."/>
            <person name="Nishi T."/>
            <person name="Shibahara T."/>
            <person name="Tanaka T."/>
            <person name="Ishii S."/>
            <person name="Yamamoto J."/>
            <person name="Saito K."/>
            <person name="Kawai Y."/>
            <person name="Isono Y."/>
            <person name="Nakamura Y."/>
            <person name="Nagahari K."/>
            <person name="Murakami K."/>
            <person name="Yasuda T."/>
            <person name="Iwayanagi T."/>
            <person name="Wagatsuma M."/>
            <person name="Shiratori A."/>
            <person name="Sudo H."/>
            <person name="Hosoiri T."/>
            <person name="Kaku Y."/>
            <person name="Kodaira H."/>
            <person name="Kondo H."/>
            <person name="Sugawara M."/>
            <person name="Takahashi M."/>
            <person name="Kanda K."/>
            <person name="Yokoi T."/>
            <person name="Furuya T."/>
            <person name="Kikkawa E."/>
            <person name="Omura Y."/>
            <person name="Abe K."/>
            <person name="Kamihara K."/>
            <person name="Katsuta N."/>
            <person name="Sato K."/>
            <person name="Tanikawa M."/>
            <person name="Yamazaki M."/>
            <person name="Ninomiya K."/>
            <person name="Ishibashi T."/>
            <person name="Yamashita H."/>
            <person name="Murakawa K."/>
            <person name="Fujimori K."/>
            <person name="Tanai H."/>
            <person name="Kimata M."/>
            <person name="Watanabe M."/>
            <person name="Hiraoka S."/>
            <person name="Chiba Y."/>
            <person name="Ishida S."/>
            <person name="Ono Y."/>
            <person name="Takiguchi S."/>
            <person name="Watanabe S."/>
            <person name="Yosida M."/>
            <person name="Hotuta T."/>
            <person name="Kusano J."/>
            <person name="Kanehori K."/>
            <person name="Takahashi-Fujii A."/>
            <person name="Hara H."/>
            <person name="Tanase T.-O."/>
            <person name="Nomura Y."/>
            <person name="Togiya S."/>
            <person name="Komai F."/>
            <person name="Hara R."/>
            <person name="Takeuchi K."/>
            <person name="Arita M."/>
            <person name="Imose N."/>
            <person name="Musashino K."/>
            <person name="Yuuki H."/>
            <person name="Oshima A."/>
            <person name="Sasaki N."/>
            <person name="Aotsuka S."/>
            <person name="Yoshikawa Y."/>
            <person name="Matsunawa H."/>
            <person name="Ichihara T."/>
            <person name="Shiohata N."/>
            <person name="Sano S."/>
            <person name="Moriya S."/>
            <person name="Momiyama H."/>
            <person name="Satoh N."/>
            <person name="Takami S."/>
            <person name="Terashima Y."/>
            <person name="Suzuki O."/>
            <person name="Nakagawa S."/>
            <person name="Senoh A."/>
            <person name="Mizoguchi H."/>
            <person name="Goto Y."/>
            <person name="Shimizu F."/>
            <person name="Wakebe H."/>
            <person name="Hishigaki H."/>
            <person name="Watanabe T."/>
            <person name="Sugiyama A."/>
            <person name="Takemoto M."/>
            <person name="Kawakami B."/>
            <person name="Yamazaki M."/>
            <person name="Watanabe K."/>
            <person name="Kumagai A."/>
            <person name="Itakura S."/>
            <person name="Fukuzumi Y."/>
            <person name="Fujimori Y."/>
            <person name="Komiyama M."/>
            <person name="Tashiro H."/>
            <person name="Tanigami A."/>
            <person name="Fujiwara T."/>
            <person name="Ono T."/>
            <person name="Yamada K."/>
            <person name="Fujii Y."/>
            <person name="Ozaki K."/>
            <person name="Hirao M."/>
            <person name="Ohmori Y."/>
            <person name="Kawabata A."/>
            <person name="Hikiji T."/>
            <person name="Kobatake N."/>
            <person name="Inagaki H."/>
            <person name="Ikema Y."/>
            <person name="Okamoto S."/>
            <person name="Okitani R."/>
            <person name="Kawakami T."/>
            <person name="Noguchi S."/>
            <person name="Itoh T."/>
            <person name="Shigeta K."/>
            <person name="Senba T."/>
            <person name="Matsumura K."/>
            <person name="Nakajima Y."/>
            <person name="Mizuno T."/>
            <person name="Morinaga M."/>
            <person name="Sasaki M."/>
            <person name="Togashi T."/>
            <person name="Oyama M."/>
            <person name="Hata H."/>
            <person name="Watanabe M."/>
            <person name="Komatsu T."/>
            <person name="Mizushima-Sugano J."/>
            <person name="Satoh T."/>
            <person name="Shirai Y."/>
            <person name="Takahashi Y."/>
            <person name="Nakagawa K."/>
            <person name="Okumura K."/>
            <person name="Nagase T."/>
            <person name="Nomura N."/>
            <person name="Kikuchi H."/>
            <person name="Masuho Y."/>
            <person name="Yamashita R."/>
            <person name="Nakai K."/>
            <person name="Yada T."/>
            <person name="Nakamura Y."/>
            <person name="Ohara O."/>
            <person name="Isogai T."/>
            <person name="Sugano S."/>
        </authorList>
    </citation>
    <scope>NUCLEOTIDE SEQUENCE [LARGE SCALE MRNA] (ISOFORM 1)</scope>
    <source>
        <tissue>Placenta</tissue>
        <tissue>Retinoblastoma</tissue>
    </source>
</reference>
<reference key="4">
    <citation type="journal article" date="2004" name="Nature">
        <title>DNA sequence and analysis of human chromosome 9.</title>
        <authorList>
            <person name="Humphray S.J."/>
            <person name="Oliver K."/>
            <person name="Hunt A.R."/>
            <person name="Plumb R.W."/>
            <person name="Loveland J.E."/>
            <person name="Howe K.L."/>
            <person name="Andrews T.D."/>
            <person name="Searle S."/>
            <person name="Hunt S.E."/>
            <person name="Scott C.E."/>
            <person name="Jones M.C."/>
            <person name="Ainscough R."/>
            <person name="Almeida J.P."/>
            <person name="Ambrose K.D."/>
            <person name="Ashwell R.I.S."/>
            <person name="Babbage A.K."/>
            <person name="Babbage S."/>
            <person name="Bagguley C.L."/>
            <person name="Bailey J."/>
            <person name="Banerjee R."/>
            <person name="Barker D.J."/>
            <person name="Barlow K.F."/>
            <person name="Bates K."/>
            <person name="Beasley H."/>
            <person name="Beasley O."/>
            <person name="Bird C.P."/>
            <person name="Bray-Allen S."/>
            <person name="Brown A.J."/>
            <person name="Brown J.Y."/>
            <person name="Burford D."/>
            <person name="Burrill W."/>
            <person name="Burton J."/>
            <person name="Carder C."/>
            <person name="Carter N.P."/>
            <person name="Chapman J.C."/>
            <person name="Chen Y."/>
            <person name="Clarke G."/>
            <person name="Clark S.Y."/>
            <person name="Clee C.M."/>
            <person name="Clegg S."/>
            <person name="Collier R.E."/>
            <person name="Corby N."/>
            <person name="Crosier M."/>
            <person name="Cummings A.T."/>
            <person name="Davies J."/>
            <person name="Dhami P."/>
            <person name="Dunn M."/>
            <person name="Dutta I."/>
            <person name="Dyer L.W."/>
            <person name="Earthrowl M.E."/>
            <person name="Faulkner L."/>
            <person name="Fleming C.J."/>
            <person name="Frankish A."/>
            <person name="Frankland J.A."/>
            <person name="French L."/>
            <person name="Fricker D.G."/>
            <person name="Garner P."/>
            <person name="Garnett J."/>
            <person name="Ghori J."/>
            <person name="Gilbert J.G.R."/>
            <person name="Glison C."/>
            <person name="Grafham D.V."/>
            <person name="Gribble S."/>
            <person name="Griffiths C."/>
            <person name="Griffiths-Jones S."/>
            <person name="Grocock R."/>
            <person name="Guy J."/>
            <person name="Hall R.E."/>
            <person name="Hammond S."/>
            <person name="Harley J.L."/>
            <person name="Harrison E.S.I."/>
            <person name="Hart E.A."/>
            <person name="Heath P.D."/>
            <person name="Henderson C.D."/>
            <person name="Hopkins B.L."/>
            <person name="Howard P.J."/>
            <person name="Howden P.J."/>
            <person name="Huckle E."/>
            <person name="Johnson C."/>
            <person name="Johnson D."/>
            <person name="Joy A.A."/>
            <person name="Kay M."/>
            <person name="Keenan S."/>
            <person name="Kershaw J.K."/>
            <person name="Kimberley A.M."/>
            <person name="King A."/>
            <person name="Knights A."/>
            <person name="Laird G.K."/>
            <person name="Langford C."/>
            <person name="Lawlor S."/>
            <person name="Leongamornlert D.A."/>
            <person name="Leversha M."/>
            <person name="Lloyd C."/>
            <person name="Lloyd D.M."/>
            <person name="Lovell J."/>
            <person name="Martin S."/>
            <person name="Mashreghi-Mohammadi M."/>
            <person name="Matthews L."/>
            <person name="McLaren S."/>
            <person name="McLay K.E."/>
            <person name="McMurray A."/>
            <person name="Milne S."/>
            <person name="Nickerson T."/>
            <person name="Nisbett J."/>
            <person name="Nordsiek G."/>
            <person name="Pearce A.V."/>
            <person name="Peck A.I."/>
            <person name="Porter K.M."/>
            <person name="Pandian R."/>
            <person name="Pelan S."/>
            <person name="Phillimore B."/>
            <person name="Povey S."/>
            <person name="Ramsey Y."/>
            <person name="Rand V."/>
            <person name="Scharfe M."/>
            <person name="Sehra H.K."/>
            <person name="Shownkeen R."/>
            <person name="Sims S.K."/>
            <person name="Skuce C.D."/>
            <person name="Smith M."/>
            <person name="Steward C.A."/>
            <person name="Swarbreck D."/>
            <person name="Sycamore N."/>
            <person name="Tester J."/>
            <person name="Thorpe A."/>
            <person name="Tracey A."/>
            <person name="Tromans A."/>
            <person name="Thomas D.W."/>
            <person name="Wall M."/>
            <person name="Wallis J.M."/>
            <person name="West A.P."/>
            <person name="Whitehead S.L."/>
            <person name="Willey D.L."/>
            <person name="Williams S.A."/>
            <person name="Wilming L."/>
            <person name="Wray P.W."/>
            <person name="Young L."/>
            <person name="Ashurst J.L."/>
            <person name="Coulson A."/>
            <person name="Blocker H."/>
            <person name="Durbin R.M."/>
            <person name="Sulston J.E."/>
            <person name="Hubbard T."/>
            <person name="Jackson M.J."/>
            <person name="Bentley D.R."/>
            <person name="Beck S."/>
            <person name="Rogers J."/>
            <person name="Dunham I."/>
        </authorList>
    </citation>
    <scope>NUCLEOTIDE SEQUENCE [LARGE SCALE GENOMIC DNA]</scope>
</reference>
<reference key="5">
    <citation type="journal article" date="2004" name="Genome Res.">
        <title>The status, quality, and expansion of the NIH full-length cDNA project: the Mammalian Gene Collection (MGC).</title>
        <authorList>
            <consortium name="The MGC Project Team"/>
        </authorList>
    </citation>
    <scope>NUCLEOTIDE SEQUENCE [LARGE SCALE MRNA] (ISOFORM 1)</scope>
    <source>
        <tissue>Leiomyosarcoma</tissue>
        <tissue>Retinoblastoma</tissue>
        <tissue>Uterus</tissue>
    </source>
</reference>
<reference key="6">
    <citation type="journal article" date="2009" name="Anal. Chem.">
        <title>Lys-N and trypsin cover complementary parts of the phosphoproteome in a refined SCX-based approach.</title>
        <authorList>
            <person name="Gauci S."/>
            <person name="Helbig A.O."/>
            <person name="Slijper M."/>
            <person name="Krijgsveld J."/>
            <person name="Heck A.J."/>
            <person name="Mohammed S."/>
        </authorList>
    </citation>
    <scope>IDENTIFICATION BY MASS SPECTROMETRY [LARGE SCALE ANALYSIS]</scope>
</reference>
<reference key="7">
    <citation type="journal article" date="2011" name="BMC Syst. Biol.">
        <title>Initial characterization of the human central proteome.</title>
        <authorList>
            <person name="Burkard T.R."/>
            <person name="Planyavsky M."/>
            <person name="Kaupe I."/>
            <person name="Breitwieser F.P."/>
            <person name="Buerckstuemmer T."/>
            <person name="Bennett K.L."/>
            <person name="Superti-Furga G."/>
            <person name="Colinge J."/>
        </authorList>
    </citation>
    <scope>IDENTIFICATION BY MASS SPECTROMETRY [LARGE SCALE ANALYSIS]</scope>
</reference>
<reference key="8">
    <citation type="journal article" date="2011" name="Sci. Signal.">
        <title>System-wide temporal characterization of the proteome and phosphoproteome of human embryonic stem cell differentiation.</title>
        <authorList>
            <person name="Rigbolt K.T."/>
            <person name="Prokhorova T.A."/>
            <person name="Akimov V."/>
            <person name="Henningsen J."/>
            <person name="Johansen P.T."/>
            <person name="Kratchmarova I."/>
            <person name="Kassem M."/>
            <person name="Mann M."/>
            <person name="Olsen J.V."/>
            <person name="Blagoev B."/>
        </authorList>
    </citation>
    <scope>IDENTIFICATION BY MASS SPECTROMETRY [LARGE SCALE ANALYSIS]</scope>
</reference>
<reference key="9">
    <citation type="journal article" date="2013" name="J. Proteome Res.">
        <title>Toward a comprehensive characterization of a human cancer cell phosphoproteome.</title>
        <authorList>
            <person name="Zhou H."/>
            <person name="Di Palma S."/>
            <person name="Preisinger C."/>
            <person name="Peng M."/>
            <person name="Polat A.N."/>
            <person name="Heck A.J."/>
            <person name="Mohammed S."/>
        </authorList>
    </citation>
    <scope>IDENTIFICATION BY MASS SPECTROMETRY [LARGE SCALE ANALYSIS]</scope>
    <source>
        <tissue>Erythroleukemia</tissue>
    </source>
</reference>
<reference key="10">
    <citation type="submission" date="2006-10" db="PDB data bank">
        <title>Solution structure of DSRM domain in spermatid perinuclear RNA-binding protein.</title>
        <authorList>
            <consortium name="RIKEN structural genomics initiative (RSGI)"/>
        </authorList>
    </citation>
    <scope>STRUCTURE BY NMR OF 378-461</scope>
</reference>
<reference key="11">
    <citation type="journal article" date="2006" name="Science">
        <title>The consensus coding sequences of human breast and colorectal cancers.</title>
        <authorList>
            <person name="Sjoeblom T."/>
            <person name="Jones S."/>
            <person name="Wood L.D."/>
            <person name="Parsons D.W."/>
            <person name="Lin J."/>
            <person name="Barber T.D."/>
            <person name="Mandelker D."/>
            <person name="Leary R.J."/>
            <person name="Ptak J."/>
            <person name="Silliman N."/>
            <person name="Szabo S."/>
            <person name="Buckhaults P."/>
            <person name="Farrell C."/>
            <person name="Meeh P."/>
            <person name="Markowitz S.D."/>
            <person name="Willis J."/>
            <person name="Dawson D."/>
            <person name="Willson J.K.V."/>
            <person name="Gazdar A.F."/>
            <person name="Hartigan J."/>
            <person name="Wu L."/>
            <person name="Liu C."/>
            <person name="Parmigiani G."/>
            <person name="Park B.H."/>
            <person name="Bachman K.E."/>
            <person name="Papadopoulos N."/>
            <person name="Vogelstein B."/>
            <person name="Kinzler K.W."/>
            <person name="Velculescu V.E."/>
        </authorList>
    </citation>
    <scope>VARIANT [LARGE SCALE ANALYSIS] ARG-280</scope>
</reference>
<accession>Q96SI9</accession>
<accession>Q32NB9</accession>
<accession>Q9BUE1</accession>
<accession>Q9BXG4</accession>
<accession>Q9H0B4</accession>
<accession>Q9H7V1</accession>
<accession>Q9NUK4</accession>
<proteinExistence type="evidence at protein level"/>
<name>STRBP_HUMAN</name>
<organism>
    <name type="scientific">Homo sapiens</name>
    <name type="common">Human</name>
    <dbReference type="NCBI Taxonomy" id="9606"/>
    <lineage>
        <taxon>Eukaryota</taxon>
        <taxon>Metazoa</taxon>
        <taxon>Chordata</taxon>
        <taxon>Craniata</taxon>
        <taxon>Vertebrata</taxon>
        <taxon>Euteleostomi</taxon>
        <taxon>Mammalia</taxon>
        <taxon>Eutheria</taxon>
        <taxon>Euarchontoglires</taxon>
        <taxon>Primates</taxon>
        <taxon>Haplorrhini</taxon>
        <taxon>Catarrhini</taxon>
        <taxon>Hominidae</taxon>
        <taxon>Homo</taxon>
    </lineage>
</organism>
<protein>
    <recommendedName>
        <fullName>Spermatid perinuclear RNA-binding protein</fullName>
    </recommendedName>
</protein>
<feature type="chain" id="PRO_0000274917" description="Spermatid perinuclear RNA-binding protein">
    <location>
        <begin position="1"/>
        <end position="672"/>
    </location>
</feature>
<feature type="domain" description="DZF" evidence="4">
    <location>
        <begin position="5"/>
        <end position="363"/>
    </location>
</feature>
<feature type="domain" description="DRBM 1" evidence="3">
    <location>
        <begin position="387"/>
        <end position="453"/>
    </location>
</feature>
<feature type="domain" description="DRBM 2" evidence="3">
    <location>
        <begin position="510"/>
        <end position="576"/>
    </location>
</feature>
<feature type="region of interest" description="Disordered" evidence="5">
    <location>
        <begin position="52"/>
        <end position="73"/>
    </location>
</feature>
<feature type="region of interest" description="Disordered" evidence="5">
    <location>
        <begin position="349"/>
        <end position="371"/>
    </location>
</feature>
<feature type="region of interest" description="Disordered" evidence="5">
    <location>
        <begin position="466"/>
        <end position="499"/>
    </location>
</feature>
<feature type="compositionally biased region" description="Basic and acidic residues" evidence="5">
    <location>
        <begin position="357"/>
        <end position="371"/>
    </location>
</feature>
<feature type="compositionally biased region" description="Basic and acidic residues" evidence="5">
    <location>
        <begin position="466"/>
        <end position="476"/>
    </location>
</feature>
<feature type="compositionally biased region" description="Low complexity" evidence="5">
    <location>
        <begin position="477"/>
        <end position="497"/>
    </location>
</feature>
<feature type="modified residue" description="Asymmetric dimethylarginine" evidence="2">
    <location>
        <position position="612"/>
    </location>
</feature>
<feature type="modified residue" description="Asymmetric dimethylarginine" evidence="2">
    <location>
        <position position="617"/>
    </location>
</feature>
<feature type="splice variant" id="VSP_022937" description="In isoform 2." evidence="7">
    <location>
        <begin position="1"/>
        <end position="14"/>
    </location>
</feature>
<feature type="sequence variant" id="VAR_035662" description="In a breast cancer sample; somatic mutation." evidence="6">
    <original>G</original>
    <variation>R</variation>
    <location>
        <position position="280"/>
    </location>
</feature>
<feature type="sequence conflict" description="In Ref. 1; AAK20832." evidence="8" ref="1">
    <original>LEK</original>
    <variation>IGRR</variation>
    <location>
        <begin position="173"/>
        <end position="175"/>
    </location>
</feature>
<feature type="sequence conflict" description="In Ref. 3; BAA92120." evidence="8" ref="3">
    <original>L</original>
    <variation>P</variation>
    <location>
        <position position="196"/>
    </location>
</feature>
<feature type="strand" evidence="9">
    <location>
        <begin position="385"/>
        <end position="387"/>
    </location>
</feature>
<feature type="helix" evidence="9">
    <location>
        <begin position="390"/>
        <end position="398"/>
    </location>
</feature>
<feature type="strand" evidence="9">
    <location>
        <begin position="405"/>
        <end position="411"/>
    </location>
</feature>
<feature type="strand" evidence="9">
    <location>
        <begin position="413"/>
        <end position="415"/>
    </location>
</feature>
<feature type="strand" evidence="9">
    <location>
        <begin position="417"/>
        <end position="424"/>
    </location>
</feature>
<feature type="strand" evidence="9">
    <location>
        <begin position="427"/>
        <end position="435"/>
    </location>
</feature>
<feature type="helix" evidence="9">
    <location>
        <begin position="436"/>
        <end position="451"/>
    </location>
</feature>
<evidence type="ECO:0000250" key="1"/>
<evidence type="ECO:0000250" key="2">
    <source>
        <dbReference type="UniProtKB" id="Q91WM1"/>
    </source>
</evidence>
<evidence type="ECO:0000255" key="3">
    <source>
        <dbReference type="PROSITE-ProRule" id="PRU00266"/>
    </source>
</evidence>
<evidence type="ECO:0000255" key="4">
    <source>
        <dbReference type="PROSITE-ProRule" id="PRU01040"/>
    </source>
</evidence>
<evidence type="ECO:0000256" key="5">
    <source>
        <dbReference type="SAM" id="MobiDB-lite"/>
    </source>
</evidence>
<evidence type="ECO:0000269" key="6">
    <source>
    </source>
</evidence>
<evidence type="ECO:0000303" key="7">
    <source>
    </source>
</evidence>
<evidence type="ECO:0000305" key="8"/>
<evidence type="ECO:0007829" key="9">
    <source>
        <dbReference type="PDB" id="2DMY"/>
    </source>
</evidence>
<gene>
    <name type="primary">STRBP</name>
    <name type="synonym">SPNR</name>
</gene>